<accession>A6NEY8</accession>
<organism>
    <name type="scientific">Homo sapiens</name>
    <name type="common">Human</name>
    <dbReference type="NCBI Taxonomy" id="9606"/>
    <lineage>
        <taxon>Eukaryota</taxon>
        <taxon>Metazoa</taxon>
        <taxon>Chordata</taxon>
        <taxon>Craniata</taxon>
        <taxon>Vertebrata</taxon>
        <taxon>Euteleostomi</taxon>
        <taxon>Mammalia</taxon>
        <taxon>Eutheria</taxon>
        <taxon>Euarchontoglires</taxon>
        <taxon>Primates</taxon>
        <taxon>Haplorrhini</taxon>
        <taxon>Catarrhini</taxon>
        <taxon>Hominidae</taxon>
        <taxon>Homo</taxon>
    </lineage>
</organism>
<reference key="1">
    <citation type="journal article" date="2005" name="Nature">
        <title>Generation and annotation of the DNA sequences of human chromosomes 2 and 4.</title>
        <authorList>
            <person name="Hillier L.W."/>
            <person name="Graves T.A."/>
            <person name="Fulton R.S."/>
            <person name="Fulton L.A."/>
            <person name="Pepin K.H."/>
            <person name="Minx P."/>
            <person name="Wagner-McPherson C."/>
            <person name="Layman D."/>
            <person name="Wylie K."/>
            <person name="Sekhon M."/>
            <person name="Becker M.C."/>
            <person name="Fewell G.A."/>
            <person name="Delehaunty K.D."/>
            <person name="Miner T.L."/>
            <person name="Nash W.E."/>
            <person name="Kremitzki C."/>
            <person name="Oddy L."/>
            <person name="Du H."/>
            <person name="Sun H."/>
            <person name="Bradshaw-Cordum H."/>
            <person name="Ali J."/>
            <person name="Carter J."/>
            <person name="Cordes M."/>
            <person name="Harris A."/>
            <person name="Isak A."/>
            <person name="van Brunt A."/>
            <person name="Nguyen C."/>
            <person name="Du F."/>
            <person name="Courtney L."/>
            <person name="Kalicki J."/>
            <person name="Ozersky P."/>
            <person name="Abbott S."/>
            <person name="Armstrong J."/>
            <person name="Belter E.A."/>
            <person name="Caruso L."/>
            <person name="Cedroni M."/>
            <person name="Cotton M."/>
            <person name="Davidson T."/>
            <person name="Desai A."/>
            <person name="Elliott G."/>
            <person name="Erb T."/>
            <person name="Fronick C."/>
            <person name="Gaige T."/>
            <person name="Haakenson W."/>
            <person name="Haglund K."/>
            <person name="Holmes A."/>
            <person name="Harkins R."/>
            <person name="Kim K."/>
            <person name="Kruchowski S.S."/>
            <person name="Strong C.M."/>
            <person name="Grewal N."/>
            <person name="Goyea E."/>
            <person name="Hou S."/>
            <person name="Levy A."/>
            <person name="Martinka S."/>
            <person name="Mead K."/>
            <person name="McLellan M.D."/>
            <person name="Meyer R."/>
            <person name="Randall-Maher J."/>
            <person name="Tomlinson C."/>
            <person name="Dauphin-Kohlberg S."/>
            <person name="Kozlowicz-Reilly A."/>
            <person name="Shah N."/>
            <person name="Swearengen-Shahid S."/>
            <person name="Snider J."/>
            <person name="Strong J.T."/>
            <person name="Thompson J."/>
            <person name="Yoakum M."/>
            <person name="Leonard S."/>
            <person name="Pearman C."/>
            <person name="Trani L."/>
            <person name="Radionenko M."/>
            <person name="Waligorski J.E."/>
            <person name="Wang C."/>
            <person name="Rock S.M."/>
            <person name="Tin-Wollam A.-M."/>
            <person name="Maupin R."/>
            <person name="Latreille P."/>
            <person name="Wendl M.C."/>
            <person name="Yang S.-P."/>
            <person name="Pohl C."/>
            <person name="Wallis J.W."/>
            <person name="Spieth J."/>
            <person name="Bieri T.A."/>
            <person name="Berkowicz N."/>
            <person name="Nelson J.O."/>
            <person name="Osborne J."/>
            <person name="Ding L."/>
            <person name="Meyer R."/>
            <person name="Sabo A."/>
            <person name="Shotland Y."/>
            <person name="Sinha P."/>
            <person name="Wohldmann P.E."/>
            <person name="Cook L.L."/>
            <person name="Hickenbotham M.T."/>
            <person name="Eldred J."/>
            <person name="Williams D."/>
            <person name="Jones T.A."/>
            <person name="She X."/>
            <person name="Ciccarelli F.D."/>
            <person name="Izaurralde E."/>
            <person name="Taylor J."/>
            <person name="Schmutz J."/>
            <person name="Myers R.M."/>
            <person name="Cox D.R."/>
            <person name="Huang X."/>
            <person name="McPherson J.D."/>
            <person name="Mardis E.R."/>
            <person name="Clifton S.W."/>
            <person name="Warren W.C."/>
            <person name="Chinwalla A.T."/>
            <person name="Eddy S.R."/>
            <person name="Marra M.A."/>
            <person name="Ovcharenko I."/>
            <person name="Furey T.S."/>
            <person name="Miller W."/>
            <person name="Eichler E.E."/>
            <person name="Bork P."/>
            <person name="Suyama M."/>
            <person name="Torrents D."/>
            <person name="Waterston R.H."/>
            <person name="Wilson R.K."/>
        </authorList>
    </citation>
    <scope>NUCLEOTIDE SEQUENCE [LARGE SCALE GENOMIC DNA]</scope>
</reference>
<comment type="similarity">
    <text evidence="1">Belongs to the PRORSD1 family.</text>
</comment>
<comment type="caution">
    <text evidence="1">Could be the product of a pseudogene. However, proteomics data suggest the existence of the protein.</text>
</comment>
<protein>
    <recommendedName>
        <fullName>Putative prolyl-tRNA synthetase associated domain-containing protein 1</fullName>
    </recommendedName>
    <alternativeName>
        <fullName>PrdX deacylase domain-containing protein 1</fullName>
    </alternativeName>
    <alternativeName>
        <fullName>Prolyl-tRNA synthetase associated domain-containing protein 1 pseudogene</fullName>
    </alternativeName>
</protein>
<name>PRXD1_HUMAN</name>
<feature type="chain" id="PRO_0000329286" description="Putative prolyl-tRNA synthetase associated domain-containing protein 1">
    <location>
        <begin position="1"/>
        <end position="169"/>
    </location>
</feature>
<sequence length="169" mass="18658">MAGAELGAALEQRLGALAIHTEVVEHPEVFTVEEMMPHIQHLKGAHSKNLFLKDKKKKNYWLVTVLHDRQINLNELAKQLGVGSGNLRFADETAMLEKLKVGQGCATPLALFCDGGDVKFVLDSAFLEGGHEKVYFHPMTNAATMGLSPEDFLTFVKMTGHDPIILNFD</sequence>
<evidence type="ECO:0000305" key="1"/>
<dbReference type="EMBL" id="AC012358">
    <property type="status" value="NOT_ANNOTATED_CDS"/>
    <property type="molecule type" value="Genomic_DNA"/>
</dbReference>
<dbReference type="SMR" id="A6NEY8"/>
<dbReference type="FunCoup" id="A6NEY8">
    <property type="interactions" value="20"/>
</dbReference>
<dbReference type="GlyGen" id="A6NEY8">
    <property type="glycosylation" value="1 site, 1 O-linked glycan (1 site)"/>
</dbReference>
<dbReference type="PhosphoSitePlus" id="A6NEY8"/>
<dbReference type="BioMuta" id="HGNC:34379"/>
<dbReference type="jPOST" id="A6NEY8"/>
<dbReference type="MassIVE" id="A6NEY8"/>
<dbReference type="ProteomicsDB" id="1018"/>
<dbReference type="AGR" id="HGNC:34379"/>
<dbReference type="GeneCards" id="PRORSD1P"/>
<dbReference type="HGNC" id="HGNC:34379">
    <property type="gene designation" value="PRORSD1P"/>
</dbReference>
<dbReference type="neXtProt" id="NX_A6NEY8"/>
<dbReference type="InParanoid" id="A6NEY8"/>
<dbReference type="PAN-GO" id="A6NEY8">
    <property type="GO annotations" value="0 GO annotations based on evolutionary models"/>
</dbReference>
<dbReference type="PhylomeDB" id="A6NEY8"/>
<dbReference type="Pharos" id="A6NEY8">
    <property type="development level" value="Tdark"/>
</dbReference>
<dbReference type="Proteomes" id="UP000005640">
    <property type="component" value="Unplaced"/>
</dbReference>
<dbReference type="RNAct" id="A6NEY8">
    <property type="molecule type" value="protein"/>
</dbReference>
<dbReference type="GO" id="GO:0002161">
    <property type="term" value="F:aminoacyl-tRNA deacylase activity"/>
    <property type="evidence" value="ECO:0007669"/>
    <property type="project" value="InterPro"/>
</dbReference>
<dbReference type="CDD" id="cd04335">
    <property type="entry name" value="PrdX_deacylase"/>
    <property type="match status" value="1"/>
</dbReference>
<dbReference type="FunFam" id="3.90.960.10:FF:000005">
    <property type="entry name" value="Putative prolyl-tRNA synthetase"/>
    <property type="match status" value="1"/>
</dbReference>
<dbReference type="Gene3D" id="3.90.960.10">
    <property type="entry name" value="YbaK/aminoacyl-tRNA synthetase-associated domain"/>
    <property type="match status" value="1"/>
</dbReference>
<dbReference type="InterPro" id="IPR040285">
    <property type="entry name" value="ProX/PRXD1"/>
</dbReference>
<dbReference type="InterPro" id="IPR036754">
    <property type="entry name" value="YbaK/aa-tRNA-synt-asso_dom_sf"/>
</dbReference>
<dbReference type="InterPro" id="IPR007214">
    <property type="entry name" value="YbaK/aa-tRNA-synth-assoc-dom"/>
</dbReference>
<dbReference type="PANTHER" id="PTHR31423:SF3">
    <property type="entry name" value="PROLYL-TRNA SYNTHETASE ASSOCIATED DOMAIN-CONTAINING PROTEIN 1-RELATED"/>
    <property type="match status" value="1"/>
</dbReference>
<dbReference type="PANTHER" id="PTHR31423">
    <property type="entry name" value="YBAK DOMAIN-CONTAINING PROTEIN"/>
    <property type="match status" value="1"/>
</dbReference>
<dbReference type="Pfam" id="PF04073">
    <property type="entry name" value="tRNA_edit"/>
    <property type="match status" value="1"/>
</dbReference>
<dbReference type="SUPFAM" id="SSF55826">
    <property type="entry name" value="YbaK/ProRS associated domain"/>
    <property type="match status" value="1"/>
</dbReference>
<gene>
    <name type="primary">PRORSD1P</name>
    <name type="synonym">NCRNA00117</name>
    <name type="synonym">PRDXDD1P</name>
</gene>
<keyword id="KW-1185">Reference proteome</keyword>
<proteinExistence type="uncertain"/>